<sequence length="67" mass="7222">MRSLYLSFSLTIIFVLVIMHAEAKAISEPNAIAEADPGIFSALKTLGKILLPVILPTVAEKIKEKVG</sequence>
<comment type="function">
    <text evidence="2">Toxin that causes a rapid and irreversible paralysis when intrathoracically injected into insects (blowflies). Does not cause spontaneous nocifensive behaviors by intraplantar injection in mice. Exhibits hemolytic and cytotoxic activities on HEK293 cells.</text>
</comment>
<comment type="subcellular location">
    <subcellularLocation>
        <location evidence="2">Secreted</location>
    </subcellularLocation>
</comment>
<comment type="tissue specificity">
    <text evidence="5">Expressed by the venom gland.</text>
</comment>
<comment type="toxic dose">
    <text evidence="2">PD(50) [1 hour] is 9.9 nmol/g when intrathoracically injected into insects (blowfly L.caesar).</text>
</comment>
<comment type="similarity">
    <text evidence="4">Belongs to the formicidae venom clade 3 family.</text>
</comment>
<protein>
    <recommendedName>
        <fullName evidence="3">Myrmicitoxin(1)-Pm6a</fullName>
        <shortName evidence="3">MYRTX(1)-Pm6a</shortName>
    </recommendedName>
</protein>
<proteinExistence type="evidence at protein level"/>
<dbReference type="EMBL" id="OR128468">
    <property type="protein sequence ID" value="WMI02506.1"/>
    <property type="molecule type" value="mRNA"/>
</dbReference>
<dbReference type="SMR" id="P0DRD5"/>
<dbReference type="GO" id="GO:0005576">
    <property type="term" value="C:extracellular region"/>
    <property type="evidence" value="ECO:0007669"/>
    <property type="project" value="UniProtKB-SubCell"/>
</dbReference>
<dbReference type="GO" id="GO:0090729">
    <property type="term" value="F:toxin activity"/>
    <property type="evidence" value="ECO:0007669"/>
    <property type="project" value="UniProtKB-KW"/>
</dbReference>
<evidence type="ECO:0000255" key="1"/>
<evidence type="ECO:0000269" key="2">
    <source>
    </source>
</evidence>
<evidence type="ECO:0000303" key="3">
    <source>
    </source>
</evidence>
<evidence type="ECO:0000305" key="4"/>
<evidence type="ECO:0000305" key="5">
    <source>
    </source>
</evidence>
<reference key="1">
    <citation type="journal article" date="2024" name="J. Biol. Chem.">
        <title>Peptide toxins that target vertebrate voltage-gated sodium channels underly the painful stings of harvester ants.</title>
        <authorList>
            <person name="Robinson S.D."/>
            <person name="Deuis J.R."/>
            <person name="Niu P."/>
            <person name="Touchard A."/>
            <person name="Mueller A."/>
            <person name="Schendel V."/>
            <person name="Brinkwirth N."/>
            <person name="King G.F."/>
            <person name="Vetter I."/>
            <person name="Schmidt J.O."/>
        </authorList>
    </citation>
    <scope>NUCLEOTIDE SEQUENCE [MRNA]</scope>
    <scope>IDENTIFICATION BY MASS SPECTROMETRY</scope>
    <scope>SUBCELLULAR LOCATION</scope>
    <scope>SYNTHESIS OF 38-66</scope>
    <scope>BIOASSAY</scope>
    <scope>TOXIC DOSE</scope>
    <scope>AMIDATION AT VAL-66</scope>
    <source>
        <tissue>Venom</tissue>
        <tissue>Venom gland</tissue>
    </source>
</reference>
<name>TX6A_POGMA</name>
<accession>P0DRD5</accession>
<keyword id="KW-0027">Amidation</keyword>
<keyword id="KW-0528">Neurotoxin</keyword>
<keyword id="KW-0964">Secreted</keyword>
<keyword id="KW-0732">Signal</keyword>
<keyword id="KW-0800">Toxin</keyword>
<organism>
    <name type="scientific">Pogonomyrmex maricopa</name>
    <name type="common">Maricopa harvester ant</name>
    <dbReference type="NCBI Taxonomy" id="144040"/>
    <lineage>
        <taxon>Eukaryota</taxon>
        <taxon>Metazoa</taxon>
        <taxon>Ecdysozoa</taxon>
        <taxon>Arthropoda</taxon>
        <taxon>Hexapoda</taxon>
        <taxon>Insecta</taxon>
        <taxon>Pterygota</taxon>
        <taxon>Neoptera</taxon>
        <taxon>Endopterygota</taxon>
        <taxon>Hymenoptera</taxon>
        <taxon>Apocrita</taxon>
        <taxon>Aculeata</taxon>
        <taxon>Formicoidea</taxon>
        <taxon>Formicidae</taxon>
        <taxon>Myrmicinae</taxon>
        <taxon>Pogonomyrmex</taxon>
    </lineage>
</organism>
<feature type="signal peptide" evidence="1">
    <location>
        <begin position="1"/>
        <end position="25"/>
    </location>
</feature>
<feature type="propeptide" id="PRO_0000461263" evidence="4">
    <location>
        <begin position="26"/>
        <end position="37"/>
    </location>
</feature>
<feature type="peptide" id="PRO_0000461264" description="Myrmicitoxin(1)-Pm6a" evidence="2">
    <location>
        <begin position="38"/>
        <end position="66"/>
    </location>
</feature>
<feature type="modified residue" description="Valine amide" evidence="2">
    <location>
        <position position="66"/>
    </location>
</feature>